<gene>
    <name type="primary">EURM3</name>
</gene>
<keyword id="KW-0020">Allergen</keyword>
<keyword id="KW-1015">Disulfide bond</keyword>
<keyword id="KW-0378">Hydrolase</keyword>
<keyword id="KW-0645">Protease</keyword>
<keyword id="KW-0964">Secreted</keyword>
<keyword id="KW-0720">Serine protease</keyword>
<keyword id="KW-0732">Signal</keyword>
<keyword id="KW-0865">Zymogen</keyword>
<comment type="subcellular location">
    <subcellularLocation>
        <location>Secreted</location>
    </subcellularLocation>
</comment>
<comment type="allergen">
    <text>Causes an allergic reaction in human. Common symptoms of mite allergy are bronchial asthma, allergic rhinitis and conjunctivitis.</text>
</comment>
<comment type="similarity">
    <text evidence="3">Belongs to the peptidase S1 family.</text>
</comment>
<dbReference type="EC" id="3.4.21.-"/>
<dbReference type="EMBL" id="AF047615">
    <property type="protein sequence ID" value="AAD10712.1"/>
    <property type="molecule type" value="mRNA"/>
</dbReference>
<dbReference type="SMR" id="O97370"/>
<dbReference type="Allergome" id="3276">
    <property type="allergen name" value="Eur m 3.0101"/>
</dbReference>
<dbReference type="Allergome" id="343">
    <property type="allergen name" value="Eur m 3"/>
</dbReference>
<dbReference type="MEROPS" id="S01.234"/>
<dbReference type="OrthoDB" id="6515605at2759"/>
<dbReference type="GO" id="GO:0005576">
    <property type="term" value="C:extracellular region"/>
    <property type="evidence" value="ECO:0007669"/>
    <property type="project" value="UniProtKB-SubCell"/>
</dbReference>
<dbReference type="GO" id="GO:0004252">
    <property type="term" value="F:serine-type endopeptidase activity"/>
    <property type="evidence" value="ECO:0007669"/>
    <property type="project" value="InterPro"/>
</dbReference>
<dbReference type="GO" id="GO:0006508">
    <property type="term" value="P:proteolysis"/>
    <property type="evidence" value="ECO:0007669"/>
    <property type="project" value="UniProtKB-KW"/>
</dbReference>
<dbReference type="CDD" id="cd00190">
    <property type="entry name" value="Tryp_SPc"/>
    <property type="match status" value="1"/>
</dbReference>
<dbReference type="FunFam" id="2.40.10.10:FF:000077">
    <property type="entry name" value="Predicted protein"/>
    <property type="match status" value="1"/>
</dbReference>
<dbReference type="Gene3D" id="2.40.10.10">
    <property type="entry name" value="Trypsin-like serine proteases"/>
    <property type="match status" value="1"/>
</dbReference>
<dbReference type="InterPro" id="IPR009003">
    <property type="entry name" value="Peptidase_S1_PA"/>
</dbReference>
<dbReference type="InterPro" id="IPR043504">
    <property type="entry name" value="Peptidase_S1_PA_chymotrypsin"/>
</dbReference>
<dbReference type="InterPro" id="IPR001314">
    <property type="entry name" value="Peptidase_S1A"/>
</dbReference>
<dbReference type="InterPro" id="IPR001254">
    <property type="entry name" value="Trypsin_dom"/>
</dbReference>
<dbReference type="InterPro" id="IPR018114">
    <property type="entry name" value="TRYPSIN_HIS"/>
</dbReference>
<dbReference type="InterPro" id="IPR033116">
    <property type="entry name" value="TRYPSIN_SER"/>
</dbReference>
<dbReference type="PANTHER" id="PTHR24252">
    <property type="entry name" value="ACROSIN-RELATED"/>
    <property type="match status" value="1"/>
</dbReference>
<dbReference type="PANTHER" id="PTHR24252:SF7">
    <property type="entry name" value="HYALIN"/>
    <property type="match status" value="1"/>
</dbReference>
<dbReference type="Pfam" id="PF00089">
    <property type="entry name" value="Trypsin"/>
    <property type="match status" value="1"/>
</dbReference>
<dbReference type="PRINTS" id="PR00722">
    <property type="entry name" value="CHYMOTRYPSIN"/>
</dbReference>
<dbReference type="SMART" id="SM00020">
    <property type="entry name" value="Tryp_SPc"/>
    <property type="match status" value="1"/>
</dbReference>
<dbReference type="SUPFAM" id="SSF50494">
    <property type="entry name" value="Trypsin-like serine proteases"/>
    <property type="match status" value="1"/>
</dbReference>
<dbReference type="PROSITE" id="PS50240">
    <property type="entry name" value="TRYPSIN_DOM"/>
    <property type="match status" value="1"/>
</dbReference>
<dbReference type="PROSITE" id="PS00134">
    <property type="entry name" value="TRYPSIN_HIS"/>
    <property type="match status" value="1"/>
</dbReference>
<dbReference type="PROSITE" id="PS00135">
    <property type="entry name" value="TRYPSIN_SER"/>
    <property type="match status" value="1"/>
</dbReference>
<protein>
    <recommendedName>
        <fullName>Mite allergen Eur m 3</fullName>
        <ecNumber>3.4.21.-</ecNumber>
    </recommendedName>
    <allergenName>Eur m 3</allergenName>
</protein>
<feature type="signal peptide" evidence="2">
    <location>
        <begin position="1"/>
        <end position="18"/>
    </location>
</feature>
<feature type="propeptide" id="PRO_0000028149" evidence="1">
    <location>
        <begin position="19"/>
        <end position="29"/>
    </location>
</feature>
<feature type="chain" id="PRO_0000028150" description="Mite allergen Eur m 3">
    <location>
        <begin position="30"/>
        <end position="261"/>
    </location>
</feature>
<feature type="domain" description="Peptidase S1" evidence="3">
    <location>
        <begin position="30"/>
        <end position="260"/>
    </location>
</feature>
<feature type="active site" description="Charge relay system" evidence="1">
    <location>
        <position position="69"/>
    </location>
</feature>
<feature type="active site" description="Charge relay system" evidence="1">
    <location>
        <position position="114"/>
    </location>
</feature>
<feature type="active site" description="Charge relay system" evidence="1">
    <location>
        <position position="214"/>
    </location>
</feature>
<feature type="site" description="Required for specificity">
    <location>
        <position position="208"/>
    </location>
</feature>
<feature type="disulfide bond" evidence="3">
    <location>
        <begin position="54"/>
        <end position="70"/>
    </location>
</feature>
<feature type="disulfide bond" evidence="3">
    <location>
        <begin position="181"/>
        <end position="198"/>
    </location>
</feature>
<feature type="disulfide bond" evidence="3">
    <location>
        <begin position="210"/>
        <end position="236"/>
    </location>
</feature>
<sequence>MVICNAIIVLLLAFNTLANPILPSSPNATIVGGQKAKAGECPYQISLQSSSHFCGGTILDEYWILTAAHCVNGQTASKLSIRYNSLKHASGGEKLSVAQIYQHEKYDSWTIDNDIALIKLQSPMTLDQKNAKSVQLPSQGSDVKVGDKVRVSGWGYLKEGSYSLPSDMYRVDIDIVAREQCNKLYEEAGATITDNMICGGNVADGGVDSCQGDSGGPVVDVASNQIVGIVSWGYGCARKGYPGVYTRVGSFIDWIDSKRSQ</sequence>
<reference key="1">
    <citation type="submission" date="1998-02" db="EMBL/GenBank/DDBJ databases">
        <authorList>
            <person name="Smith W."/>
            <person name="Hart B.J."/>
            <person name="Thomas W.R."/>
        </authorList>
    </citation>
    <scope>NUCLEOTIDE SEQUENCE [MRNA]</scope>
</reference>
<accession>O97370</accession>
<name>EURM3_EURMA</name>
<organism>
    <name type="scientific">Euroglyphus maynei</name>
    <name type="common">Mayne's house dust mite</name>
    <dbReference type="NCBI Taxonomy" id="6958"/>
    <lineage>
        <taxon>Eukaryota</taxon>
        <taxon>Metazoa</taxon>
        <taxon>Ecdysozoa</taxon>
        <taxon>Arthropoda</taxon>
        <taxon>Chelicerata</taxon>
        <taxon>Arachnida</taxon>
        <taxon>Acari</taxon>
        <taxon>Acariformes</taxon>
        <taxon>Sarcoptiformes</taxon>
        <taxon>Astigmata</taxon>
        <taxon>Psoroptidia</taxon>
        <taxon>Analgoidea</taxon>
        <taxon>Pyroglyphidae</taxon>
        <taxon>Pyroglyphinae</taxon>
        <taxon>Euroglyphus</taxon>
    </lineage>
</organism>
<evidence type="ECO:0000250" key="1"/>
<evidence type="ECO:0000255" key="2"/>
<evidence type="ECO:0000255" key="3">
    <source>
        <dbReference type="PROSITE-ProRule" id="PRU00274"/>
    </source>
</evidence>
<proteinExistence type="evidence at protein level"/>